<proteinExistence type="inferred from homology"/>
<accession>B2US50</accession>
<sequence length="387" mass="42478">MLQRIYLDNNATTRIDPKVKEIMDPFLRDHYGNPSSLHQFGTETHPAIAEALDKLYKGINARDIDDVIITSCATESNNWVLKGVYFDECLKKGKNHIVTTVTEHPAVRSTCNFLESLGVEVTYLPINEHGSITAEQVKEAITEKTALVSVMWANNETGLIFPIEEIGAICKEKGVLFHTDAVQAIGKIPVDVLKANVDFLSFSAHKFHGPKGIGGLYIRSGVGLTPLFHGGEHMNGRRSGTLNVPYIVGMGEAMKLAVEHLDYEKEVVGKLRDKLEEALLKIPDVMVVGDRIHRVPNTTLISVRGIEGEAMLWDLNRSNIAASTGSACASEDLEANPVMVAIGASKELAHTAIRLSLSRFNTEAEIDKTIEVFSQAATRLRNISSSY</sequence>
<protein>
    <recommendedName>
        <fullName evidence="1">Cysteine desulfurase IscS</fullName>
        <ecNumber evidence="1">2.8.1.7</ecNumber>
    </recommendedName>
</protein>
<feature type="chain" id="PRO_1000119632" description="Cysteine desulfurase IscS">
    <location>
        <begin position="1"/>
        <end position="387"/>
    </location>
</feature>
<feature type="active site" description="Cysteine persulfide intermediate" evidence="1">
    <location>
        <position position="328"/>
    </location>
</feature>
<feature type="binding site" evidence="1">
    <location>
        <begin position="73"/>
        <end position="74"/>
    </location>
    <ligand>
        <name>pyridoxal 5'-phosphate</name>
        <dbReference type="ChEBI" id="CHEBI:597326"/>
    </ligand>
</feature>
<feature type="binding site" evidence="1">
    <location>
        <position position="155"/>
    </location>
    <ligand>
        <name>pyridoxal 5'-phosphate</name>
        <dbReference type="ChEBI" id="CHEBI:597326"/>
    </ligand>
</feature>
<feature type="binding site" evidence="1">
    <location>
        <position position="183"/>
    </location>
    <ligand>
        <name>pyridoxal 5'-phosphate</name>
        <dbReference type="ChEBI" id="CHEBI:597326"/>
    </ligand>
</feature>
<feature type="binding site" evidence="1">
    <location>
        <begin position="203"/>
        <end position="205"/>
    </location>
    <ligand>
        <name>pyridoxal 5'-phosphate</name>
        <dbReference type="ChEBI" id="CHEBI:597326"/>
    </ligand>
</feature>
<feature type="binding site" evidence="1">
    <location>
        <position position="241"/>
    </location>
    <ligand>
        <name>pyridoxal 5'-phosphate</name>
        <dbReference type="ChEBI" id="CHEBI:597326"/>
    </ligand>
</feature>
<feature type="binding site" description="via persulfide group" evidence="1">
    <location>
        <position position="328"/>
    </location>
    <ligand>
        <name>[2Fe-2S] cluster</name>
        <dbReference type="ChEBI" id="CHEBI:190135"/>
        <note>ligand shared with IscU</note>
    </ligand>
</feature>
<feature type="modified residue" description="N6-(pyridoxal phosphate)lysine" evidence="1">
    <location>
        <position position="206"/>
    </location>
</feature>
<name>ISCS_HELPS</name>
<keyword id="KW-0001">2Fe-2S</keyword>
<keyword id="KW-0963">Cytoplasm</keyword>
<keyword id="KW-0408">Iron</keyword>
<keyword id="KW-0411">Iron-sulfur</keyword>
<keyword id="KW-0479">Metal-binding</keyword>
<keyword id="KW-0663">Pyridoxal phosphate</keyword>
<keyword id="KW-0808">Transferase</keyword>
<dbReference type="EC" id="2.8.1.7" evidence="1"/>
<dbReference type="EMBL" id="CP001072">
    <property type="protein sequence ID" value="ACD47682.1"/>
    <property type="molecule type" value="Genomic_DNA"/>
</dbReference>
<dbReference type="RefSeq" id="WP_000941704.1">
    <property type="nucleotide sequence ID" value="NC_010698.2"/>
</dbReference>
<dbReference type="SMR" id="B2US50"/>
<dbReference type="KEGG" id="hps:HPSH_01140"/>
<dbReference type="HOGENOM" id="CLU_003433_0_0_7"/>
<dbReference type="UniPathway" id="UPA00266"/>
<dbReference type="GO" id="GO:1990221">
    <property type="term" value="C:L-cysteine desulfurase complex"/>
    <property type="evidence" value="ECO:0007669"/>
    <property type="project" value="UniProtKB-ARBA"/>
</dbReference>
<dbReference type="GO" id="GO:0051537">
    <property type="term" value="F:2 iron, 2 sulfur cluster binding"/>
    <property type="evidence" value="ECO:0007669"/>
    <property type="project" value="UniProtKB-UniRule"/>
</dbReference>
<dbReference type="GO" id="GO:0031071">
    <property type="term" value="F:cysteine desulfurase activity"/>
    <property type="evidence" value="ECO:0007669"/>
    <property type="project" value="UniProtKB-UniRule"/>
</dbReference>
<dbReference type="GO" id="GO:0046872">
    <property type="term" value="F:metal ion binding"/>
    <property type="evidence" value="ECO:0007669"/>
    <property type="project" value="UniProtKB-KW"/>
</dbReference>
<dbReference type="GO" id="GO:0030170">
    <property type="term" value="F:pyridoxal phosphate binding"/>
    <property type="evidence" value="ECO:0007669"/>
    <property type="project" value="UniProtKB-UniRule"/>
</dbReference>
<dbReference type="GO" id="GO:0044571">
    <property type="term" value="P:[2Fe-2S] cluster assembly"/>
    <property type="evidence" value="ECO:0007669"/>
    <property type="project" value="UniProtKB-UniRule"/>
</dbReference>
<dbReference type="GO" id="GO:0006534">
    <property type="term" value="P:cysteine metabolic process"/>
    <property type="evidence" value="ECO:0007669"/>
    <property type="project" value="InterPro"/>
</dbReference>
<dbReference type="FunFam" id="3.40.640.10:FF:000084">
    <property type="entry name" value="IscS-like cysteine desulfurase"/>
    <property type="match status" value="1"/>
</dbReference>
<dbReference type="Gene3D" id="3.90.1150.10">
    <property type="entry name" value="Aspartate Aminotransferase, domain 1"/>
    <property type="match status" value="1"/>
</dbReference>
<dbReference type="Gene3D" id="3.40.640.10">
    <property type="entry name" value="Type I PLP-dependent aspartate aminotransferase-like (Major domain)"/>
    <property type="match status" value="1"/>
</dbReference>
<dbReference type="HAMAP" id="MF_00331">
    <property type="entry name" value="Cys_desulf_IscS"/>
    <property type="match status" value="1"/>
</dbReference>
<dbReference type="InterPro" id="IPR000192">
    <property type="entry name" value="Aminotrans_V_dom"/>
</dbReference>
<dbReference type="InterPro" id="IPR020578">
    <property type="entry name" value="Aminotrans_V_PyrdxlP_BS"/>
</dbReference>
<dbReference type="InterPro" id="IPR010240">
    <property type="entry name" value="Cys_deSase_IscS"/>
</dbReference>
<dbReference type="InterPro" id="IPR017773">
    <property type="entry name" value="Cys_deSase_NifS_proteobacteria"/>
</dbReference>
<dbReference type="InterPro" id="IPR016454">
    <property type="entry name" value="Cysteine_dSase"/>
</dbReference>
<dbReference type="InterPro" id="IPR015424">
    <property type="entry name" value="PyrdxlP-dep_Trfase"/>
</dbReference>
<dbReference type="InterPro" id="IPR015421">
    <property type="entry name" value="PyrdxlP-dep_Trfase_major"/>
</dbReference>
<dbReference type="InterPro" id="IPR015422">
    <property type="entry name" value="PyrdxlP-dep_Trfase_small"/>
</dbReference>
<dbReference type="NCBIfam" id="TIGR03403">
    <property type="entry name" value="nifS_epsilon"/>
    <property type="match status" value="1"/>
</dbReference>
<dbReference type="PANTHER" id="PTHR11601:SF34">
    <property type="entry name" value="CYSTEINE DESULFURASE"/>
    <property type="match status" value="1"/>
</dbReference>
<dbReference type="PANTHER" id="PTHR11601">
    <property type="entry name" value="CYSTEINE DESULFURYLASE FAMILY MEMBER"/>
    <property type="match status" value="1"/>
</dbReference>
<dbReference type="Pfam" id="PF00266">
    <property type="entry name" value="Aminotran_5"/>
    <property type="match status" value="1"/>
</dbReference>
<dbReference type="PIRSF" id="PIRSF005572">
    <property type="entry name" value="NifS"/>
    <property type="match status" value="1"/>
</dbReference>
<dbReference type="SUPFAM" id="SSF53383">
    <property type="entry name" value="PLP-dependent transferases"/>
    <property type="match status" value="1"/>
</dbReference>
<dbReference type="PROSITE" id="PS00595">
    <property type="entry name" value="AA_TRANSFER_CLASS_5"/>
    <property type="match status" value="1"/>
</dbReference>
<gene>
    <name evidence="1" type="primary">iscS</name>
    <name type="ordered locus">HPSH_01140</name>
</gene>
<reference key="1">
    <citation type="submission" date="2008-05" db="EMBL/GenBank/DDBJ databases">
        <title>Genome sequence of Helicobacter pylori from the remote Amazon: traces of Asian ancestry of the first Americans.</title>
        <authorList>
            <person name="Kersulyte D."/>
            <person name="Kalia A."/>
            <person name="Gilman R.H."/>
            <person name="Berg D.E."/>
        </authorList>
    </citation>
    <scope>NUCLEOTIDE SEQUENCE [LARGE SCALE GENOMIC DNA]</scope>
    <source>
        <strain>Shi470</strain>
    </source>
</reference>
<evidence type="ECO:0000255" key="1">
    <source>
        <dbReference type="HAMAP-Rule" id="MF_00331"/>
    </source>
</evidence>
<organism>
    <name type="scientific">Helicobacter pylori (strain Shi470)</name>
    <dbReference type="NCBI Taxonomy" id="512562"/>
    <lineage>
        <taxon>Bacteria</taxon>
        <taxon>Pseudomonadati</taxon>
        <taxon>Campylobacterota</taxon>
        <taxon>Epsilonproteobacteria</taxon>
        <taxon>Campylobacterales</taxon>
        <taxon>Helicobacteraceae</taxon>
        <taxon>Helicobacter</taxon>
    </lineage>
</organism>
<comment type="function">
    <text evidence="1">Master enzyme that delivers sulfur to a number of partners involved in Fe-S cluster assembly, tRNA modification or cofactor biosynthesis. Catalyzes the removal of elemental sulfur atoms from cysteine to produce alanine. Functions as a sulfur delivery protein for Fe-S cluster synthesis onto IscU, an Fe-S scaffold assembly protein, as well as other S acceptor proteins.</text>
</comment>
<comment type="catalytic activity">
    <reaction evidence="1">
        <text>(sulfur carrier)-H + L-cysteine = (sulfur carrier)-SH + L-alanine</text>
        <dbReference type="Rhea" id="RHEA:43892"/>
        <dbReference type="Rhea" id="RHEA-COMP:14737"/>
        <dbReference type="Rhea" id="RHEA-COMP:14739"/>
        <dbReference type="ChEBI" id="CHEBI:29917"/>
        <dbReference type="ChEBI" id="CHEBI:35235"/>
        <dbReference type="ChEBI" id="CHEBI:57972"/>
        <dbReference type="ChEBI" id="CHEBI:64428"/>
        <dbReference type="EC" id="2.8.1.7"/>
    </reaction>
</comment>
<comment type="cofactor">
    <cofactor evidence="1">
        <name>pyridoxal 5'-phosphate</name>
        <dbReference type="ChEBI" id="CHEBI:597326"/>
    </cofactor>
</comment>
<comment type="pathway">
    <text evidence="1">Cofactor biosynthesis; iron-sulfur cluster biosynthesis.</text>
</comment>
<comment type="subunit">
    <text evidence="1">Homodimer. Forms a heterotetramer with IscU, interacts with other sulfur acceptors.</text>
</comment>
<comment type="subcellular location">
    <subcellularLocation>
        <location evidence="1">Cytoplasm</location>
    </subcellularLocation>
</comment>
<comment type="similarity">
    <text evidence="1">Belongs to the class-V pyridoxal-phosphate-dependent aminotransferase family. NifS/IscS subfamily.</text>
</comment>